<feature type="signal peptide" evidence="1">
    <location>
        <begin position="1"/>
        <end position="23"/>
    </location>
</feature>
<feature type="chain" id="PRO_0000023708" description="Peroxidase 42">
    <location>
        <begin position="24"/>
        <end position="330"/>
    </location>
</feature>
<feature type="active site" description="Proton acceptor" evidence="2">
    <location>
        <position position="71"/>
    </location>
</feature>
<feature type="binding site" evidence="2">
    <location>
        <position position="72"/>
    </location>
    <ligand>
        <name>Ca(2+)</name>
        <dbReference type="ChEBI" id="CHEBI:29108"/>
        <label>1</label>
    </ligand>
</feature>
<feature type="binding site" evidence="2">
    <location>
        <position position="75"/>
    </location>
    <ligand>
        <name>Ca(2+)</name>
        <dbReference type="ChEBI" id="CHEBI:29108"/>
        <label>1</label>
    </ligand>
</feature>
<feature type="binding site" evidence="2">
    <location>
        <position position="79"/>
    </location>
    <ligand>
        <name>Ca(2+)</name>
        <dbReference type="ChEBI" id="CHEBI:29108"/>
        <label>1</label>
    </ligand>
</feature>
<feature type="binding site" evidence="2">
    <location>
        <position position="81"/>
    </location>
    <ligand>
        <name>Ca(2+)</name>
        <dbReference type="ChEBI" id="CHEBI:29108"/>
        <label>1</label>
    </ligand>
</feature>
<feature type="binding site" evidence="2">
    <location>
        <position position="167"/>
    </location>
    <ligand>
        <name>substrate</name>
    </ligand>
</feature>
<feature type="binding site" description="axial binding residue" evidence="2">
    <location>
        <position position="197"/>
    </location>
    <ligand>
        <name>heme b</name>
        <dbReference type="ChEBI" id="CHEBI:60344"/>
    </ligand>
    <ligandPart>
        <name>Fe</name>
        <dbReference type="ChEBI" id="CHEBI:18248"/>
    </ligandPart>
</feature>
<feature type="binding site" evidence="2">
    <location>
        <position position="198"/>
    </location>
    <ligand>
        <name>Ca(2+)</name>
        <dbReference type="ChEBI" id="CHEBI:29108"/>
        <label>2</label>
    </ligand>
</feature>
<feature type="binding site" evidence="2">
    <location>
        <position position="247"/>
    </location>
    <ligand>
        <name>Ca(2+)</name>
        <dbReference type="ChEBI" id="CHEBI:29108"/>
        <label>2</label>
    </ligand>
</feature>
<feature type="binding site" evidence="2">
    <location>
        <position position="250"/>
    </location>
    <ligand>
        <name>Ca(2+)</name>
        <dbReference type="ChEBI" id="CHEBI:29108"/>
        <label>2</label>
    </ligand>
</feature>
<feature type="binding site" evidence="2">
    <location>
        <position position="255"/>
    </location>
    <ligand>
        <name>Ca(2+)</name>
        <dbReference type="ChEBI" id="CHEBI:29108"/>
        <label>2</label>
    </ligand>
</feature>
<feature type="site" description="Transition state stabilizer" evidence="2">
    <location>
        <position position="67"/>
    </location>
</feature>
<feature type="glycosylation site" description="N-linked (GlcNAc...) asparagine" evidence="1">
    <location>
        <position position="170"/>
    </location>
</feature>
<feature type="disulfide bond" evidence="2">
    <location>
        <begin position="40"/>
        <end position="119"/>
    </location>
</feature>
<feature type="disulfide bond" evidence="2">
    <location>
        <begin position="73"/>
        <end position="78"/>
    </location>
</feature>
<feature type="disulfide bond" evidence="2">
    <location>
        <begin position="125"/>
        <end position="323"/>
    </location>
</feature>
<feature type="disulfide bond" evidence="2">
    <location>
        <begin position="204"/>
        <end position="231"/>
    </location>
</feature>
<feature type="sequence conflict" description="In Ref. 2 and 6." evidence="5" ref="2 6">
    <original>C</original>
    <variation>F</variation>
    <location>
        <position position="13"/>
    </location>
</feature>
<feature type="sequence conflict" description="In Ref. 2 and 6." evidence="5" ref="2 6">
    <original>A</original>
    <variation>T</variation>
    <location>
        <position position="27"/>
    </location>
</feature>
<feature type="sequence conflict" description="In Ref. 2 and 6." evidence="5" ref="2 6">
    <original>V</original>
    <variation>I</variation>
    <location>
        <position position="47"/>
    </location>
</feature>
<protein>
    <recommendedName>
        <fullName>Peroxidase 42</fullName>
        <shortName>Atperox P42</shortName>
        <ecNumber>1.11.1.7</ecNumber>
    </recommendedName>
    <alternativeName>
        <fullName>ATP1a/ATP1b</fullName>
    </alternativeName>
    <alternativeName>
        <fullName>PRXR1</fullName>
    </alternativeName>
</protein>
<proteinExistence type="evidence at protein level"/>
<evidence type="ECO:0000255" key="1"/>
<evidence type="ECO:0000255" key="2">
    <source>
        <dbReference type="PROSITE-ProRule" id="PRU00297"/>
    </source>
</evidence>
<evidence type="ECO:0000269" key="3">
    <source>
    </source>
</evidence>
<evidence type="ECO:0000269" key="4">
    <source ref="9"/>
</evidence>
<evidence type="ECO:0000305" key="5"/>
<dbReference type="EC" id="1.11.1.7"/>
<dbReference type="EMBL" id="X98313">
    <property type="protein sequence ID" value="CAA66957.1"/>
    <property type="molecule type" value="mRNA"/>
</dbReference>
<dbReference type="EMBL" id="X98189">
    <property type="protein sequence ID" value="CAA66862.1"/>
    <property type="molecule type" value="mRNA"/>
</dbReference>
<dbReference type="EMBL" id="AL021890">
    <property type="protein sequence ID" value="CAA17163.1"/>
    <property type="status" value="ALT_INIT"/>
    <property type="molecule type" value="Genomic_DNA"/>
</dbReference>
<dbReference type="EMBL" id="AL022140">
    <property type="status" value="NOT_ANNOTATED_CDS"/>
    <property type="molecule type" value="Genomic_DNA"/>
</dbReference>
<dbReference type="EMBL" id="AL161556">
    <property type="protein sequence ID" value="CAB79151.1"/>
    <property type="status" value="ALT_INIT"/>
    <property type="molecule type" value="Genomic_DNA"/>
</dbReference>
<dbReference type="EMBL" id="CP002687">
    <property type="protein sequence ID" value="AEE84535.1"/>
    <property type="molecule type" value="Genomic_DNA"/>
</dbReference>
<dbReference type="EMBL" id="AF325015">
    <property type="protein sequence ID" value="AAG40367.1"/>
    <property type="molecule type" value="mRNA"/>
</dbReference>
<dbReference type="EMBL" id="AF428379">
    <property type="protein sequence ID" value="AAL16147.1"/>
    <property type="molecule type" value="mRNA"/>
</dbReference>
<dbReference type="EMBL" id="AY056809">
    <property type="protein sequence ID" value="AAL10500.1"/>
    <property type="molecule type" value="mRNA"/>
</dbReference>
<dbReference type="EMBL" id="AY058071">
    <property type="protein sequence ID" value="AAL24179.1"/>
    <property type="molecule type" value="mRNA"/>
</dbReference>
<dbReference type="EMBL" id="AY059810">
    <property type="protein sequence ID" value="AAL24292.1"/>
    <property type="molecule type" value="mRNA"/>
</dbReference>
<dbReference type="EMBL" id="AY132009">
    <property type="protein sequence ID" value="AAM91042.1"/>
    <property type="molecule type" value="mRNA"/>
</dbReference>
<dbReference type="EMBL" id="AF083767">
    <property type="protein sequence ID" value="AAN60325.1"/>
    <property type="molecule type" value="mRNA"/>
</dbReference>
<dbReference type="EMBL" id="Z17792">
    <property type="protein sequence ID" value="CAA79071.1"/>
    <property type="molecule type" value="mRNA"/>
</dbReference>
<dbReference type="PIR" id="T05478">
    <property type="entry name" value="T05478"/>
</dbReference>
<dbReference type="RefSeq" id="NP_567641.1">
    <property type="nucleotide sequence ID" value="NM_118317.4"/>
</dbReference>
<dbReference type="SMR" id="Q9SB81"/>
<dbReference type="BioGRID" id="13574">
    <property type="interactions" value="4"/>
</dbReference>
<dbReference type="FunCoup" id="Q9SB81">
    <property type="interactions" value="229"/>
</dbReference>
<dbReference type="IntAct" id="Q9SB81">
    <property type="interactions" value="1"/>
</dbReference>
<dbReference type="STRING" id="3702.Q9SB81"/>
<dbReference type="PeroxiBase" id="208">
    <property type="entry name" value="AtPrx42"/>
</dbReference>
<dbReference type="GlyCosmos" id="Q9SB81">
    <property type="glycosylation" value="1 site, No reported glycans"/>
</dbReference>
<dbReference type="GlyGen" id="Q9SB81">
    <property type="glycosylation" value="1 site"/>
</dbReference>
<dbReference type="PaxDb" id="3702-AT4G21960.1"/>
<dbReference type="ProteomicsDB" id="236303"/>
<dbReference type="EnsemblPlants" id="AT4G21960.1">
    <property type="protein sequence ID" value="AT4G21960.1"/>
    <property type="gene ID" value="AT4G21960"/>
</dbReference>
<dbReference type="GeneID" id="828285"/>
<dbReference type="Gramene" id="AT4G21960.1">
    <property type="protein sequence ID" value="AT4G21960.1"/>
    <property type="gene ID" value="AT4G21960"/>
</dbReference>
<dbReference type="KEGG" id="ath:AT4G21960"/>
<dbReference type="Araport" id="AT4G21960"/>
<dbReference type="TAIR" id="AT4G21960">
    <property type="gene designation" value="PRXR1"/>
</dbReference>
<dbReference type="eggNOG" id="ENOG502QRC2">
    <property type="taxonomic scope" value="Eukaryota"/>
</dbReference>
<dbReference type="HOGENOM" id="CLU_010543_0_0_1"/>
<dbReference type="InParanoid" id="Q9SB81"/>
<dbReference type="OMA" id="MMVAILC"/>
<dbReference type="PhylomeDB" id="Q9SB81"/>
<dbReference type="BioCyc" id="ARA:AT4G21960-MONOMER"/>
<dbReference type="PRO" id="PR:Q9SB81"/>
<dbReference type="Proteomes" id="UP000006548">
    <property type="component" value="Chromosome 4"/>
</dbReference>
<dbReference type="ExpressionAtlas" id="Q9SB81">
    <property type="expression patterns" value="baseline and differential"/>
</dbReference>
<dbReference type="GO" id="GO:0005576">
    <property type="term" value="C:extracellular region"/>
    <property type="evidence" value="ECO:0007669"/>
    <property type="project" value="UniProtKB-SubCell"/>
</dbReference>
<dbReference type="GO" id="GO:0009505">
    <property type="term" value="C:plant-type cell wall"/>
    <property type="evidence" value="ECO:0000314"/>
    <property type="project" value="TAIR"/>
</dbReference>
<dbReference type="GO" id="GO:0020037">
    <property type="term" value="F:heme binding"/>
    <property type="evidence" value="ECO:0007669"/>
    <property type="project" value="InterPro"/>
</dbReference>
<dbReference type="GO" id="GO:0140825">
    <property type="term" value="F:lactoperoxidase activity"/>
    <property type="evidence" value="ECO:0007669"/>
    <property type="project" value="UniProtKB-EC"/>
</dbReference>
<dbReference type="GO" id="GO:0046872">
    <property type="term" value="F:metal ion binding"/>
    <property type="evidence" value="ECO:0007669"/>
    <property type="project" value="UniProtKB-KW"/>
</dbReference>
<dbReference type="GO" id="GO:0042744">
    <property type="term" value="P:hydrogen peroxide catabolic process"/>
    <property type="evidence" value="ECO:0007669"/>
    <property type="project" value="UniProtKB-KW"/>
</dbReference>
<dbReference type="GO" id="GO:0006979">
    <property type="term" value="P:response to oxidative stress"/>
    <property type="evidence" value="ECO:0007669"/>
    <property type="project" value="InterPro"/>
</dbReference>
<dbReference type="GO" id="GO:0048511">
    <property type="term" value="P:rhythmic process"/>
    <property type="evidence" value="ECO:0007669"/>
    <property type="project" value="UniProtKB-KW"/>
</dbReference>
<dbReference type="CDD" id="cd00693">
    <property type="entry name" value="secretory_peroxidase"/>
    <property type="match status" value="1"/>
</dbReference>
<dbReference type="FunFam" id="1.10.420.10:FF:000007">
    <property type="entry name" value="Peroxidase"/>
    <property type="match status" value="1"/>
</dbReference>
<dbReference type="FunFam" id="1.10.520.10:FF:000010">
    <property type="entry name" value="Peroxidase"/>
    <property type="match status" value="1"/>
</dbReference>
<dbReference type="Gene3D" id="1.10.520.10">
    <property type="match status" value="1"/>
</dbReference>
<dbReference type="Gene3D" id="1.10.420.10">
    <property type="entry name" value="Peroxidase, domain 2"/>
    <property type="match status" value="1"/>
</dbReference>
<dbReference type="InterPro" id="IPR002016">
    <property type="entry name" value="Haem_peroxidase"/>
</dbReference>
<dbReference type="InterPro" id="IPR010255">
    <property type="entry name" value="Haem_peroxidase_sf"/>
</dbReference>
<dbReference type="InterPro" id="IPR000823">
    <property type="entry name" value="Peroxidase_pln"/>
</dbReference>
<dbReference type="InterPro" id="IPR033905">
    <property type="entry name" value="Secretory_peroxidase"/>
</dbReference>
<dbReference type="PANTHER" id="PTHR31517">
    <property type="match status" value="1"/>
</dbReference>
<dbReference type="PANTHER" id="PTHR31517:SF80">
    <property type="entry name" value="PEROXIDASE"/>
    <property type="match status" value="1"/>
</dbReference>
<dbReference type="Pfam" id="PF00141">
    <property type="entry name" value="peroxidase"/>
    <property type="match status" value="1"/>
</dbReference>
<dbReference type="PRINTS" id="PR00458">
    <property type="entry name" value="PEROXIDASE"/>
</dbReference>
<dbReference type="PRINTS" id="PR00461">
    <property type="entry name" value="PLPEROXIDASE"/>
</dbReference>
<dbReference type="SUPFAM" id="SSF48113">
    <property type="entry name" value="Heme-dependent peroxidases"/>
    <property type="match status" value="1"/>
</dbReference>
<dbReference type="PROSITE" id="PS50873">
    <property type="entry name" value="PEROXIDASE_4"/>
    <property type="match status" value="1"/>
</dbReference>
<reference key="1">
    <citation type="online journal article" date="1996" name="Plant Gene Register">
        <title>Eleven cDNA clones from Arabidopsis thaliana encoding isoperoxidases.</title>
        <authorList>
            <person name="Capelli N."/>
            <person name="Tognolli M."/>
            <person name="Flach J."/>
            <person name="Overney S."/>
            <person name="Penel C."/>
            <person name="Greppin H."/>
            <person name="Simon P."/>
        </authorList>
        <locator>PGR96-066</locator>
    </citation>
    <scope>NUCLEOTIDE SEQUENCE [MRNA]</scope>
    <source>
        <strain>cv. Columbia</strain>
        <tissue>Flower</tissue>
        <tissue>Leaf</tissue>
        <tissue>Root</tissue>
        <tissue>Silique</tissue>
        <tissue>Stem</tissue>
    </source>
</reference>
<reference key="2">
    <citation type="journal article" date="1997" name="Plant Mol. Biol.">
        <title>Sequence and RT-PCR expression analysis of two peroxidases from Arabidopsis thaliana belonging to a novel evolutionary branch of plant peroxidases.</title>
        <authorList>
            <person name="Kjaersgaard I.V.H."/>
            <person name="Jespersen H.M."/>
            <person name="Rasmussen S.K."/>
            <person name="Welinder K.G."/>
        </authorList>
    </citation>
    <scope>NUCLEOTIDE SEQUENCE [MRNA]</scope>
    <source>
        <strain>cv. Columbia</strain>
    </source>
</reference>
<reference key="3">
    <citation type="journal article" date="1999" name="Nature">
        <title>Sequence and analysis of chromosome 4 of the plant Arabidopsis thaliana.</title>
        <authorList>
            <person name="Mayer K.F.X."/>
            <person name="Schueller C."/>
            <person name="Wambutt R."/>
            <person name="Murphy G."/>
            <person name="Volckaert G."/>
            <person name="Pohl T."/>
            <person name="Duesterhoeft A."/>
            <person name="Stiekema W."/>
            <person name="Entian K.-D."/>
            <person name="Terryn N."/>
            <person name="Harris B."/>
            <person name="Ansorge W."/>
            <person name="Brandt P."/>
            <person name="Grivell L.A."/>
            <person name="Rieger M."/>
            <person name="Weichselgartner M."/>
            <person name="de Simone V."/>
            <person name="Obermaier B."/>
            <person name="Mache R."/>
            <person name="Mueller M."/>
            <person name="Kreis M."/>
            <person name="Delseny M."/>
            <person name="Puigdomenech P."/>
            <person name="Watson M."/>
            <person name="Schmidtheini T."/>
            <person name="Reichert B."/>
            <person name="Portetelle D."/>
            <person name="Perez-Alonso M."/>
            <person name="Boutry M."/>
            <person name="Bancroft I."/>
            <person name="Vos P."/>
            <person name="Hoheisel J."/>
            <person name="Zimmermann W."/>
            <person name="Wedler H."/>
            <person name="Ridley P."/>
            <person name="Langham S.-A."/>
            <person name="McCullagh B."/>
            <person name="Bilham L."/>
            <person name="Robben J."/>
            <person name="van der Schueren J."/>
            <person name="Grymonprez B."/>
            <person name="Chuang Y.-J."/>
            <person name="Vandenbussche F."/>
            <person name="Braeken M."/>
            <person name="Weltjens I."/>
            <person name="Voet M."/>
            <person name="Bastiaens I."/>
            <person name="Aert R."/>
            <person name="Defoor E."/>
            <person name="Weitzenegger T."/>
            <person name="Bothe G."/>
            <person name="Ramsperger U."/>
            <person name="Hilbert H."/>
            <person name="Braun M."/>
            <person name="Holzer E."/>
            <person name="Brandt A."/>
            <person name="Peters S."/>
            <person name="van Staveren M."/>
            <person name="Dirkse W."/>
            <person name="Mooijman P."/>
            <person name="Klein Lankhorst R."/>
            <person name="Rose M."/>
            <person name="Hauf J."/>
            <person name="Koetter P."/>
            <person name="Berneiser S."/>
            <person name="Hempel S."/>
            <person name="Feldpausch M."/>
            <person name="Lamberth S."/>
            <person name="Van den Daele H."/>
            <person name="De Keyser A."/>
            <person name="Buysshaert C."/>
            <person name="Gielen J."/>
            <person name="Villarroel R."/>
            <person name="De Clercq R."/>
            <person name="van Montagu M."/>
            <person name="Rogers J."/>
            <person name="Cronin A."/>
            <person name="Quail M.A."/>
            <person name="Bray-Allen S."/>
            <person name="Clark L."/>
            <person name="Doggett J."/>
            <person name="Hall S."/>
            <person name="Kay M."/>
            <person name="Lennard N."/>
            <person name="McLay K."/>
            <person name="Mayes R."/>
            <person name="Pettett A."/>
            <person name="Rajandream M.A."/>
            <person name="Lyne M."/>
            <person name="Benes V."/>
            <person name="Rechmann S."/>
            <person name="Borkova D."/>
            <person name="Bloecker H."/>
            <person name="Scharfe M."/>
            <person name="Grimm M."/>
            <person name="Loehnert T.-H."/>
            <person name="Dose S."/>
            <person name="de Haan M."/>
            <person name="Maarse A.C."/>
            <person name="Schaefer M."/>
            <person name="Mueller-Auer S."/>
            <person name="Gabel C."/>
            <person name="Fuchs M."/>
            <person name="Fartmann B."/>
            <person name="Granderath K."/>
            <person name="Dauner D."/>
            <person name="Herzl A."/>
            <person name="Neumann S."/>
            <person name="Argiriou A."/>
            <person name="Vitale D."/>
            <person name="Liguori R."/>
            <person name="Piravandi E."/>
            <person name="Massenet O."/>
            <person name="Quigley F."/>
            <person name="Clabauld G."/>
            <person name="Muendlein A."/>
            <person name="Felber R."/>
            <person name="Schnabl S."/>
            <person name="Hiller R."/>
            <person name="Schmidt W."/>
            <person name="Lecharny A."/>
            <person name="Aubourg S."/>
            <person name="Chefdor F."/>
            <person name="Cooke R."/>
            <person name="Berger C."/>
            <person name="Monfort A."/>
            <person name="Casacuberta E."/>
            <person name="Gibbons T."/>
            <person name="Weber N."/>
            <person name="Vandenbol M."/>
            <person name="Bargues M."/>
            <person name="Terol J."/>
            <person name="Torres A."/>
            <person name="Perez-Perez A."/>
            <person name="Purnelle B."/>
            <person name="Bent E."/>
            <person name="Johnson S."/>
            <person name="Tacon D."/>
            <person name="Jesse T."/>
            <person name="Heijnen L."/>
            <person name="Schwarz S."/>
            <person name="Scholler P."/>
            <person name="Heber S."/>
            <person name="Francs P."/>
            <person name="Bielke C."/>
            <person name="Frishman D."/>
            <person name="Haase D."/>
            <person name="Lemcke K."/>
            <person name="Mewes H.-W."/>
            <person name="Stocker S."/>
            <person name="Zaccaria P."/>
            <person name="Bevan M."/>
            <person name="Wilson R.K."/>
            <person name="de la Bastide M."/>
            <person name="Habermann K."/>
            <person name="Parnell L."/>
            <person name="Dedhia N."/>
            <person name="Gnoj L."/>
            <person name="Schutz K."/>
            <person name="Huang E."/>
            <person name="Spiegel L."/>
            <person name="Sekhon M."/>
            <person name="Murray J."/>
            <person name="Sheet P."/>
            <person name="Cordes M."/>
            <person name="Abu-Threideh J."/>
            <person name="Stoneking T."/>
            <person name="Kalicki J."/>
            <person name="Graves T."/>
            <person name="Harmon G."/>
            <person name="Edwards J."/>
            <person name="Latreille P."/>
            <person name="Courtney L."/>
            <person name="Cloud J."/>
            <person name="Abbott A."/>
            <person name="Scott K."/>
            <person name="Johnson D."/>
            <person name="Minx P."/>
            <person name="Bentley D."/>
            <person name="Fulton B."/>
            <person name="Miller N."/>
            <person name="Greco T."/>
            <person name="Kemp K."/>
            <person name="Kramer J."/>
            <person name="Fulton L."/>
            <person name="Mardis E."/>
            <person name="Dante M."/>
            <person name="Pepin K."/>
            <person name="Hillier L.W."/>
            <person name="Nelson J."/>
            <person name="Spieth J."/>
            <person name="Ryan E."/>
            <person name="Andrews S."/>
            <person name="Geisel C."/>
            <person name="Layman D."/>
            <person name="Du H."/>
            <person name="Ali J."/>
            <person name="Berghoff A."/>
            <person name="Jones K."/>
            <person name="Drone K."/>
            <person name="Cotton M."/>
            <person name="Joshu C."/>
            <person name="Antonoiu B."/>
            <person name="Zidanic M."/>
            <person name="Strong C."/>
            <person name="Sun H."/>
            <person name="Lamar B."/>
            <person name="Yordan C."/>
            <person name="Ma P."/>
            <person name="Zhong J."/>
            <person name="Preston R."/>
            <person name="Vil D."/>
            <person name="Shekher M."/>
            <person name="Matero A."/>
            <person name="Shah R."/>
            <person name="Swaby I.K."/>
            <person name="O'Shaughnessy A."/>
            <person name="Rodriguez M."/>
            <person name="Hoffman J."/>
            <person name="Till S."/>
            <person name="Granat S."/>
            <person name="Shohdy N."/>
            <person name="Hasegawa A."/>
            <person name="Hameed A."/>
            <person name="Lodhi M."/>
            <person name="Johnson A."/>
            <person name="Chen E."/>
            <person name="Marra M.A."/>
            <person name="Martienssen R."/>
            <person name="McCombie W.R."/>
        </authorList>
    </citation>
    <scope>NUCLEOTIDE SEQUENCE [LARGE SCALE GENOMIC DNA]</scope>
    <source>
        <strain>cv. Columbia</strain>
    </source>
</reference>
<reference key="4">
    <citation type="journal article" date="2017" name="Plant J.">
        <title>Araport11: a complete reannotation of the Arabidopsis thaliana reference genome.</title>
        <authorList>
            <person name="Cheng C.Y."/>
            <person name="Krishnakumar V."/>
            <person name="Chan A.P."/>
            <person name="Thibaud-Nissen F."/>
            <person name="Schobel S."/>
            <person name="Town C.D."/>
        </authorList>
    </citation>
    <scope>GENOME REANNOTATION</scope>
    <source>
        <strain>cv. Columbia</strain>
    </source>
</reference>
<reference key="5">
    <citation type="journal article" date="2003" name="Science">
        <title>Empirical analysis of transcriptional activity in the Arabidopsis genome.</title>
        <authorList>
            <person name="Yamada K."/>
            <person name="Lim J."/>
            <person name="Dale J.M."/>
            <person name="Chen H."/>
            <person name="Shinn P."/>
            <person name="Palm C.J."/>
            <person name="Southwick A.M."/>
            <person name="Wu H.C."/>
            <person name="Kim C.J."/>
            <person name="Nguyen M."/>
            <person name="Pham P.K."/>
            <person name="Cheuk R.F."/>
            <person name="Karlin-Newmann G."/>
            <person name="Liu S.X."/>
            <person name="Lam B."/>
            <person name="Sakano H."/>
            <person name="Wu T."/>
            <person name="Yu G."/>
            <person name="Miranda M."/>
            <person name="Quach H.L."/>
            <person name="Tripp M."/>
            <person name="Chang C.H."/>
            <person name="Lee J.M."/>
            <person name="Toriumi M.J."/>
            <person name="Chan M.M."/>
            <person name="Tang C.C."/>
            <person name="Onodera C.S."/>
            <person name="Deng J.M."/>
            <person name="Akiyama K."/>
            <person name="Ansari Y."/>
            <person name="Arakawa T."/>
            <person name="Banh J."/>
            <person name="Banno F."/>
            <person name="Bowser L."/>
            <person name="Brooks S.Y."/>
            <person name="Carninci P."/>
            <person name="Chao Q."/>
            <person name="Choy N."/>
            <person name="Enju A."/>
            <person name="Goldsmith A.D."/>
            <person name="Gurjal M."/>
            <person name="Hansen N.F."/>
            <person name="Hayashizaki Y."/>
            <person name="Johnson-Hopson C."/>
            <person name="Hsuan V.W."/>
            <person name="Iida K."/>
            <person name="Karnes M."/>
            <person name="Khan S."/>
            <person name="Koesema E."/>
            <person name="Ishida J."/>
            <person name="Jiang P.X."/>
            <person name="Jones T."/>
            <person name="Kawai J."/>
            <person name="Kamiya A."/>
            <person name="Meyers C."/>
            <person name="Nakajima M."/>
            <person name="Narusaka M."/>
            <person name="Seki M."/>
            <person name="Sakurai T."/>
            <person name="Satou M."/>
            <person name="Tamse R."/>
            <person name="Vaysberg M."/>
            <person name="Wallender E.K."/>
            <person name="Wong C."/>
            <person name="Yamamura Y."/>
            <person name="Yuan S."/>
            <person name="Shinozaki K."/>
            <person name="Davis R.W."/>
            <person name="Theologis A."/>
            <person name="Ecker J.R."/>
        </authorList>
    </citation>
    <scope>NUCLEOTIDE SEQUENCE [LARGE SCALE MRNA]</scope>
    <source>
        <strain>cv. Columbia</strain>
    </source>
</reference>
<reference key="6">
    <citation type="submission" date="1998-08" db="EMBL/GenBank/DDBJ databases">
        <title>Signal peptide selection derived cDNAs from Arabidopsis thaliana leaves and guard cells.</title>
        <authorList>
            <person name="Stracke R."/>
            <person name="Palme K."/>
        </authorList>
    </citation>
    <scope>NUCLEOTIDE SEQUENCE [LARGE SCALE MRNA] OF 1-168</scope>
    <source>
        <tissue>Leaf</tissue>
    </source>
</reference>
<reference key="7">
    <citation type="journal article" date="1993" name="Plant J.">
        <title>An inventory of 1152 expressed sequence tags obtained by partial sequencing of cDNAs from Arabidopsis thaliana.</title>
        <authorList>
            <person name="Hoefte H."/>
            <person name="Desprez T."/>
            <person name="Amselem J."/>
            <person name="Chiapello H."/>
            <person name="Rouze P."/>
            <person name="Caboche M."/>
            <person name="Moisan A."/>
            <person name="Jourjon M.-F."/>
            <person name="Charpenteau J.-L."/>
            <person name="Berthomieu P."/>
            <person name="Guerrier D."/>
            <person name="Giraudat J."/>
            <person name="Quigley F."/>
            <person name="Thomas F."/>
            <person name="Yu D.-Y."/>
            <person name="Mache R."/>
            <person name="Raynal M."/>
            <person name="Cooke R."/>
            <person name="Grellet F."/>
            <person name="Delseny M."/>
            <person name="Parmentier Y."/>
            <person name="de Marcillac G."/>
            <person name="Gigot C."/>
            <person name="Fleck J."/>
            <person name="Philipps G."/>
            <person name="Axelos M."/>
            <person name="Bardet C."/>
            <person name="Tremousaygue D."/>
            <person name="Lescure B."/>
        </authorList>
    </citation>
    <scope>NUCLEOTIDE SEQUENCE [LARGE SCALE MRNA] OF 278-330</scope>
    <source>
        <strain>cv. Columbia</strain>
        <tissue>Green siliques</tissue>
    </source>
</reference>
<reference key="8">
    <citation type="journal article" date="1998" name="FEBS Lett.">
        <title>Computational analyses and annotations of the Arabidopsis peroxidase gene family.</title>
        <authorList>
            <person name="Oestergaard L."/>
            <person name="Pedersen A.G."/>
            <person name="Jespersen H.M."/>
            <person name="Brunak S."/>
            <person name="Welinder K.G."/>
        </authorList>
    </citation>
    <scope>CHARACTERIZATION</scope>
    <source>
        <strain>cv. Columbia</strain>
    </source>
</reference>
<reference key="9">
    <citation type="journal article" date="2001" name="Plant Physiol. Biochem.">
        <title>Toward elucidating the global gene expression patterns of developing Arabidopsis: parallel analysis of 8300 genes by a high-density oligonucleotide probe array.</title>
        <authorList>
            <person name="Zhu T."/>
            <person name="Budworth P."/>
            <person name="Han B."/>
            <person name="Brown D."/>
            <person name="Chang H.-S."/>
            <person name="Zou G."/>
            <person name="Wang X."/>
        </authorList>
    </citation>
    <scope>TISSUE SPECIFICITY</scope>
    <source>
        <strain>cv. Columbia</strain>
    </source>
</reference>
<reference key="10">
    <citation type="journal article" date="2001" name="Plant Cell">
        <title>Microarray analysis of diurnal and circadian-regulated genes in Arabidopsis.</title>
        <authorList>
            <person name="Schaffer R."/>
            <person name="Landgraf J."/>
            <person name="Accerbi M."/>
            <person name="Simon V."/>
            <person name="Larson M."/>
            <person name="Wisman E."/>
        </authorList>
    </citation>
    <scope>INDUCTION</scope>
    <source>
        <strain>cv. Columbia</strain>
    </source>
</reference>
<reference key="11">
    <citation type="journal article" date="2002" name="Gene">
        <title>Analysis and expression of the class III peroxidase large gene family in Arabidopsis thaliana.</title>
        <authorList>
            <person name="Tognolli M."/>
            <person name="Penel C."/>
            <person name="Greppin H."/>
            <person name="Simon P."/>
        </authorList>
    </citation>
    <scope>GENE FAMILY ORGANIZATION</scope>
    <scope>NOMENCLATURE</scope>
    <source>
        <strain>cv. Columbia</strain>
    </source>
</reference>
<organism>
    <name type="scientific">Arabidopsis thaliana</name>
    <name type="common">Mouse-ear cress</name>
    <dbReference type="NCBI Taxonomy" id="3702"/>
    <lineage>
        <taxon>Eukaryota</taxon>
        <taxon>Viridiplantae</taxon>
        <taxon>Streptophyta</taxon>
        <taxon>Embryophyta</taxon>
        <taxon>Tracheophyta</taxon>
        <taxon>Spermatophyta</taxon>
        <taxon>Magnoliopsida</taxon>
        <taxon>eudicotyledons</taxon>
        <taxon>Gunneridae</taxon>
        <taxon>Pentapetalae</taxon>
        <taxon>rosids</taxon>
        <taxon>malvids</taxon>
        <taxon>Brassicales</taxon>
        <taxon>Brassicaceae</taxon>
        <taxon>Camelineae</taxon>
        <taxon>Arabidopsis</taxon>
    </lineage>
</organism>
<keyword id="KW-0090">Biological rhythms</keyword>
<keyword id="KW-0106">Calcium</keyword>
<keyword id="KW-1015">Disulfide bond</keyword>
<keyword id="KW-0325">Glycoprotein</keyword>
<keyword id="KW-0349">Heme</keyword>
<keyword id="KW-0376">Hydrogen peroxide</keyword>
<keyword id="KW-0408">Iron</keyword>
<keyword id="KW-0479">Metal-binding</keyword>
<keyword id="KW-0560">Oxidoreductase</keyword>
<keyword id="KW-0575">Peroxidase</keyword>
<keyword id="KW-1185">Reference proteome</keyword>
<keyword id="KW-0964">Secreted</keyword>
<keyword id="KW-0732">Signal</keyword>
<accession>Q9SB81</accession>
<accession>Q41937</accession>
<accession>Q42579</accession>
<accession>Q43730</accession>
<name>PER42_ARATH</name>
<comment type="function">
    <text>Removal of H(2)O(2), oxidation of toxic reductants, biosynthesis and degradation of lignin, suberization, auxin catabolism, response to environmental stresses such as wounding, pathogen attack and oxidative stress. These functions might be dependent on each isozyme/isoform in each plant tissue.</text>
</comment>
<comment type="function">
    <text>Might function as heat shock-like defense protein.</text>
</comment>
<comment type="catalytic activity">
    <reaction>
        <text>2 a phenolic donor + H2O2 = 2 a phenolic radical donor + 2 H2O</text>
        <dbReference type="Rhea" id="RHEA:56136"/>
        <dbReference type="ChEBI" id="CHEBI:15377"/>
        <dbReference type="ChEBI" id="CHEBI:16240"/>
        <dbReference type="ChEBI" id="CHEBI:139520"/>
        <dbReference type="ChEBI" id="CHEBI:139521"/>
        <dbReference type="EC" id="1.11.1.7"/>
    </reaction>
</comment>
<comment type="cofactor">
    <cofactor evidence="2">
        <name>heme b</name>
        <dbReference type="ChEBI" id="CHEBI:60344"/>
    </cofactor>
    <text evidence="2">Binds 1 heme b (iron(II)-protoporphyrin IX) group per subunit.</text>
</comment>
<comment type="cofactor">
    <cofactor evidence="2">
        <name>Ca(2+)</name>
        <dbReference type="ChEBI" id="CHEBI:29108"/>
    </cofactor>
    <text evidence="2">Binds 2 calcium ions per subunit.</text>
</comment>
<comment type="subcellular location">
    <subcellularLocation>
        <location evidence="2">Secreted</location>
    </subcellularLocation>
</comment>
<comment type="tissue specificity">
    <text evidence="4">Constitutively expressed in the whole plant, with the highest expression in roots.</text>
</comment>
<comment type="induction">
    <text evidence="3">Expressed under a diurnal rhythm (circadian clock control).</text>
</comment>
<comment type="miscellaneous">
    <text>There are 73 peroxidase genes in A.thaliana.</text>
</comment>
<comment type="similarity">
    <text evidence="2">Belongs to the peroxidase family. Classical plant (class III) peroxidase subfamily.</text>
</comment>
<comment type="sequence caution" evidence="5">
    <conflict type="erroneous initiation">
        <sequence resource="EMBL-CDS" id="CAA17163"/>
    </conflict>
</comment>
<comment type="sequence caution" evidence="5">
    <conflict type="erroneous initiation">
        <sequence resource="EMBL-CDS" id="CAB79151"/>
    </conflict>
</comment>
<gene>
    <name type="primary">PER42</name>
    <name type="synonym">P42</name>
    <name type="ordered locus">At4g21960</name>
    <name type="ORF">F1N20.3</name>
    <name type="ORF">T8O5.170</name>
</gene>
<sequence length="330" mass="37295">MGGKGVMMVAILCLWALSATSEAVTEAEPGLMMNFYKDTCPQAEDIVREQVKLLYKRHKNTAFSWLRNIFHDCAVESCDASLLLDSTRRELGEKEHDRSFGLRNFRYIEEIKEALERECPGVVSCSDILVLSAREGIEAVGGPYIPLKTGRRDGLKSRTDMLESYLPDHNESISVVLEKFKSIGIDTPGLVALLGSHSVGRTHCVKLVHRLYPEVDPSLNPDHVPHMLHKCPDSIPDPKAVQYVRNDRGTPMVLDNNYYRNILDNKGLLLVDHQLAHDKRTRPIVKKMAKDQAYFFKEFTRAIQILSENNPLTGSKGEIRKQCNLANKNH</sequence>